<organism>
    <name type="scientific">Prochlorococcus marinus (strain MIT 9211)</name>
    <dbReference type="NCBI Taxonomy" id="93059"/>
    <lineage>
        <taxon>Bacteria</taxon>
        <taxon>Bacillati</taxon>
        <taxon>Cyanobacteriota</taxon>
        <taxon>Cyanophyceae</taxon>
        <taxon>Synechococcales</taxon>
        <taxon>Prochlorococcaceae</taxon>
        <taxon>Prochlorococcus</taxon>
    </lineage>
</organism>
<proteinExistence type="inferred from homology"/>
<keyword id="KW-0028">Amino-acid biosynthesis</keyword>
<keyword id="KW-0055">Arginine biosynthesis</keyword>
<keyword id="KW-0963">Cytoplasm</keyword>
<keyword id="KW-0456">Lyase</keyword>
<keyword id="KW-1185">Reference proteome</keyword>
<feature type="chain" id="PRO_1000089101" description="Argininosuccinate lyase">
    <location>
        <begin position="1"/>
        <end position="462"/>
    </location>
</feature>
<comment type="catalytic activity">
    <reaction evidence="1">
        <text>2-(N(omega)-L-arginino)succinate = fumarate + L-arginine</text>
        <dbReference type="Rhea" id="RHEA:24020"/>
        <dbReference type="ChEBI" id="CHEBI:29806"/>
        <dbReference type="ChEBI" id="CHEBI:32682"/>
        <dbReference type="ChEBI" id="CHEBI:57472"/>
        <dbReference type="EC" id="4.3.2.1"/>
    </reaction>
</comment>
<comment type="pathway">
    <text evidence="1">Amino-acid biosynthesis; L-arginine biosynthesis; L-arginine from L-ornithine and carbamoyl phosphate: step 3/3.</text>
</comment>
<comment type="subcellular location">
    <subcellularLocation>
        <location evidence="1">Cytoplasm</location>
    </subcellularLocation>
</comment>
<comment type="similarity">
    <text evidence="1">Belongs to the lyase 1 family. Argininosuccinate lyase subfamily.</text>
</comment>
<accession>A9B9L0</accession>
<sequence>MGKPWSDRFEVGLHPFIESFNASIKFDFLLLQEDLDGSIAHARMLGKTGIINADEASQLEKGLNQIRLEASQGVFNADQPAEDVHFAVENRLIELLGPLGKKLHTGRSRNDQIATDIRLWLRRKIDEINFDLENIQKILLGHAEKNLYTLIPGYTHLQRAQPVSLAHHLLAYLEMFQRDRDRLVEVKSRVNTSPLGAAALAGTSLPIDRLYTADQLNFTSIYSNSLDAVSDRDFAVEFIAASSLIMVHLSRLSEEIIFWSSEEFSFVKLTDRCATGSSIMPQKKNPDVPELVRGKSGRVFGHLQALLVMLKGLPLAYNKDFQEDKEALFDTVVTVRNSLQAMSILLEEGLEFSLDRLGSAVESDFSNATDVADYLVSKEVPFREAYQIVGRLVKLCMKEGILLKDLSFDQWQDMHPAFDQDIYKRLTPEHVVASRISQGGTGFAQVSAQLENWQNQFSSLKE</sequence>
<name>ARLY_PROM4</name>
<gene>
    <name evidence="1" type="primary">argH</name>
    <name type="ordered locus">P9211_00121</name>
</gene>
<dbReference type="EC" id="4.3.2.1" evidence="1"/>
<dbReference type="EMBL" id="CP000878">
    <property type="protein sequence ID" value="ABX07943.1"/>
    <property type="molecule type" value="Genomic_DNA"/>
</dbReference>
<dbReference type="SMR" id="A9B9L0"/>
<dbReference type="STRING" id="93059.P9211_00121"/>
<dbReference type="KEGG" id="pmj:P9211_00121"/>
<dbReference type="eggNOG" id="COG0165">
    <property type="taxonomic scope" value="Bacteria"/>
</dbReference>
<dbReference type="HOGENOM" id="CLU_027272_2_3_3"/>
<dbReference type="OrthoDB" id="9769623at2"/>
<dbReference type="UniPathway" id="UPA00068">
    <property type="reaction ID" value="UER00114"/>
</dbReference>
<dbReference type="Proteomes" id="UP000000788">
    <property type="component" value="Chromosome"/>
</dbReference>
<dbReference type="GO" id="GO:0005829">
    <property type="term" value="C:cytosol"/>
    <property type="evidence" value="ECO:0007669"/>
    <property type="project" value="TreeGrafter"/>
</dbReference>
<dbReference type="GO" id="GO:0004056">
    <property type="term" value="F:argininosuccinate lyase activity"/>
    <property type="evidence" value="ECO:0007669"/>
    <property type="project" value="UniProtKB-UniRule"/>
</dbReference>
<dbReference type="GO" id="GO:0042450">
    <property type="term" value="P:arginine biosynthetic process via ornithine"/>
    <property type="evidence" value="ECO:0007669"/>
    <property type="project" value="InterPro"/>
</dbReference>
<dbReference type="GO" id="GO:0006526">
    <property type="term" value="P:L-arginine biosynthetic process"/>
    <property type="evidence" value="ECO:0007669"/>
    <property type="project" value="UniProtKB-UniRule"/>
</dbReference>
<dbReference type="CDD" id="cd01359">
    <property type="entry name" value="Argininosuccinate_lyase"/>
    <property type="match status" value="1"/>
</dbReference>
<dbReference type="FunFam" id="1.10.275.10:FF:000002">
    <property type="entry name" value="Argininosuccinate lyase"/>
    <property type="match status" value="1"/>
</dbReference>
<dbReference type="FunFam" id="1.10.40.30:FF:000001">
    <property type="entry name" value="Argininosuccinate lyase"/>
    <property type="match status" value="1"/>
</dbReference>
<dbReference type="FunFam" id="1.20.200.10:FF:000015">
    <property type="entry name" value="argininosuccinate lyase isoform X2"/>
    <property type="match status" value="1"/>
</dbReference>
<dbReference type="Gene3D" id="1.10.40.30">
    <property type="entry name" value="Fumarase/aspartase (C-terminal domain)"/>
    <property type="match status" value="1"/>
</dbReference>
<dbReference type="Gene3D" id="1.20.200.10">
    <property type="entry name" value="Fumarase/aspartase (Central domain)"/>
    <property type="match status" value="1"/>
</dbReference>
<dbReference type="Gene3D" id="1.10.275.10">
    <property type="entry name" value="Fumarase/aspartase (N-terminal domain)"/>
    <property type="match status" value="1"/>
</dbReference>
<dbReference type="HAMAP" id="MF_00006">
    <property type="entry name" value="Arg_succ_lyase"/>
    <property type="match status" value="1"/>
</dbReference>
<dbReference type="InterPro" id="IPR029419">
    <property type="entry name" value="Arg_succ_lyase_C"/>
</dbReference>
<dbReference type="InterPro" id="IPR009049">
    <property type="entry name" value="Argininosuccinate_lyase"/>
</dbReference>
<dbReference type="InterPro" id="IPR024083">
    <property type="entry name" value="Fumarase/histidase_N"/>
</dbReference>
<dbReference type="InterPro" id="IPR020557">
    <property type="entry name" value="Fumarate_lyase_CS"/>
</dbReference>
<dbReference type="InterPro" id="IPR000362">
    <property type="entry name" value="Fumarate_lyase_fam"/>
</dbReference>
<dbReference type="InterPro" id="IPR022761">
    <property type="entry name" value="Fumarate_lyase_N"/>
</dbReference>
<dbReference type="InterPro" id="IPR008948">
    <property type="entry name" value="L-Aspartase-like"/>
</dbReference>
<dbReference type="NCBIfam" id="TIGR00838">
    <property type="entry name" value="argH"/>
    <property type="match status" value="1"/>
</dbReference>
<dbReference type="PANTHER" id="PTHR43814">
    <property type="entry name" value="ARGININOSUCCINATE LYASE"/>
    <property type="match status" value="1"/>
</dbReference>
<dbReference type="PANTHER" id="PTHR43814:SF1">
    <property type="entry name" value="ARGININOSUCCINATE LYASE"/>
    <property type="match status" value="1"/>
</dbReference>
<dbReference type="Pfam" id="PF14698">
    <property type="entry name" value="ASL_C2"/>
    <property type="match status" value="1"/>
</dbReference>
<dbReference type="Pfam" id="PF00206">
    <property type="entry name" value="Lyase_1"/>
    <property type="match status" value="1"/>
</dbReference>
<dbReference type="PRINTS" id="PR00145">
    <property type="entry name" value="ARGSUCLYASE"/>
</dbReference>
<dbReference type="PRINTS" id="PR00149">
    <property type="entry name" value="FUMRATELYASE"/>
</dbReference>
<dbReference type="SUPFAM" id="SSF48557">
    <property type="entry name" value="L-aspartase-like"/>
    <property type="match status" value="1"/>
</dbReference>
<dbReference type="PROSITE" id="PS00163">
    <property type="entry name" value="FUMARATE_LYASES"/>
    <property type="match status" value="1"/>
</dbReference>
<reference key="1">
    <citation type="journal article" date="2007" name="PLoS Genet.">
        <title>Patterns and implications of gene gain and loss in the evolution of Prochlorococcus.</title>
        <authorList>
            <person name="Kettler G.C."/>
            <person name="Martiny A.C."/>
            <person name="Huang K."/>
            <person name="Zucker J."/>
            <person name="Coleman M.L."/>
            <person name="Rodrigue S."/>
            <person name="Chen F."/>
            <person name="Lapidus A."/>
            <person name="Ferriera S."/>
            <person name="Johnson J."/>
            <person name="Steglich C."/>
            <person name="Church G.M."/>
            <person name="Richardson P."/>
            <person name="Chisholm S.W."/>
        </authorList>
    </citation>
    <scope>NUCLEOTIDE SEQUENCE [LARGE SCALE GENOMIC DNA]</scope>
    <source>
        <strain>MIT 9211</strain>
    </source>
</reference>
<evidence type="ECO:0000255" key="1">
    <source>
        <dbReference type="HAMAP-Rule" id="MF_00006"/>
    </source>
</evidence>
<protein>
    <recommendedName>
        <fullName evidence="1">Argininosuccinate lyase</fullName>
        <shortName evidence="1">ASAL</shortName>
        <ecNumber evidence="1">4.3.2.1</ecNumber>
    </recommendedName>
    <alternativeName>
        <fullName evidence="1">Arginosuccinase</fullName>
    </alternativeName>
</protein>